<evidence type="ECO:0000256" key="1">
    <source>
        <dbReference type="SAM" id="MobiDB-lite"/>
    </source>
</evidence>
<comment type="interaction">
    <interactant intactId="EBI-18398448">
        <id>A6NGS2</id>
    </interactant>
    <interactant intactId="EBI-641666">
        <id>Q15172</id>
        <label>PPP2R5A</label>
    </interactant>
    <organismsDiffer>false</organismsDiffer>
    <experiments>3</experiments>
</comment>
<comment type="interaction">
    <interactant intactId="EBI-18398448">
        <id>A6NGS2</id>
    </interactant>
    <interactant intactId="EBI-3921347">
        <id>P51687</id>
        <label>SUOX</label>
    </interactant>
    <organismsDiffer>false</organismsDiffer>
    <experiments>3</experiments>
</comment>
<protein>
    <recommendedName>
        <fullName>Glutamate-rich protein 4</fullName>
    </recommendedName>
</protein>
<organism>
    <name type="scientific">Homo sapiens</name>
    <name type="common">Human</name>
    <dbReference type="NCBI Taxonomy" id="9606"/>
    <lineage>
        <taxon>Eukaryota</taxon>
        <taxon>Metazoa</taxon>
        <taxon>Chordata</taxon>
        <taxon>Craniata</taxon>
        <taxon>Vertebrata</taxon>
        <taxon>Euteleostomi</taxon>
        <taxon>Mammalia</taxon>
        <taxon>Eutheria</taxon>
        <taxon>Euarchontoglires</taxon>
        <taxon>Primates</taxon>
        <taxon>Haplorrhini</taxon>
        <taxon>Catarrhini</taxon>
        <taxon>Hominidae</taxon>
        <taxon>Homo</taxon>
    </lineage>
</organism>
<name>ERIC4_HUMAN</name>
<dbReference type="EMBL" id="AC011526">
    <property type="status" value="NOT_ANNOTATED_CDS"/>
    <property type="molecule type" value="Genomic_DNA"/>
</dbReference>
<dbReference type="CCDS" id="CCDS46085.1"/>
<dbReference type="RefSeq" id="NP_001123986.1">
    <property type="nucleotide sequence ID" value="NM_001130514.3"/>
</dbReference>
<dbReference type="SMR" id="A6NGS2"/>
<dbReference type="BioGRID" id="936859">
    <property type="interactions" value="2"/>
</dbReference>
<dbReference type="IntAct" id="A6NGS2">
    <property type="interactions" value="2"/>
</dbReference>
<dbReference type="STRING" id="9606.ENSP00000367429"/>
<dbReference type="BioMuta" id="ERICH4"/>
<dbReference type="jPOST" id="A6NGS2"/>
<dbReference type="MassIVE" id="A6NGS2"/>
<dbReference type="PaxDb" id="9606-ENSP00000367429"/>
<dbReference type="PeptideAtlas" id="A6NGS2"/>
<dbReference type="ProteomicsDB" id="1148"/>
<dbReference type="Antibodypedia" id="65006">
    <property type="antibodies" value="9 antibodies from 5 providers"/>
</dbReference>
<dbReference type="DNASU" id="100170765"/>
<dbReference type="Ensembl" id="ENST00000378187.3">
    <property type="protein sequence ID" value="ENSP00000367429.2"/>
    <property type="gene ID" value="ENSG00000204978.3"/>
</dbReference>
<dbReference type="GeneID" id="100170765"/>
<dbReference type="KEGG" id="hsa:100170765"/>
<dbReference type="MANE-Select" id="ENST00000378187.3">
    <property type="protein sequence ID" value="ENSP00000367429.2"/>
    <property type="RefSeq nucleotide sequence ID" value="NM_001130514.3"/>
    <property type="RefSeq protein sequence ID" value="NP_001123986.1"/>
</dbReference>
<dbReference type="UCSC" id="uc010xwc.2">
    <property type="organism name" value="human"/>
</dbReference>
<dbReference type="AGR" id="HGNC:34497"/>
<dbReference type="CTD" id="100170765"/>
<dbReference type="GeneCards" id="ERICH4"/>
<dbReference type="HGNC" id="HGNC:34497">
    <property type="gene designation" value="ERICH4"/>
</dbReference>
<dbReference type="HPA" id="ENSG00000204978">
    <property type="expression patterns" value="Group enriched (intestine, kidney)"/>
</dbReference>
<dbReference type="neXtProt" id="NX_A6NGS2"/>
<dbReference type="OpenTargets" id="ENSG00000204978"/>
<dbReference type="PharmGKB" id="PA162378862"/>
<dbReference type="VEuPathDB" id="HostDB:ENSG00000204978"/>
<dbReference type="eggNOG" id="ENOG502RWFY">
    <property type="taxonomic scope" value="Eukaryota"/>
</dbReference>
<dbReference type="GeneTree" id="ENSGT00390000006319"/>
<dbReference type="HOGENOM" id="CLU_152287_0_0_1"/>
<dbReference type="InParanoid" id="A6NGS2"/>
<dbReference type="OMA" id="LWIWQEL"/>
<dbReference type="OrthoDB" id="9838132at2759"/>
<dbReference type="PAN-GO" id="A6NGS2">
    <property type="GO annotations" value="0 GO annotations based on evolutionary models"/>
</dbReference>
<dbReference type="PhylomeDB" id="A6NGS2"/>
<dbReference type="TreeFam" id="TF352665"/>
<dbReference type="PathwayCommons" id="A6NGS2"/>
<dbReference type="SignaLink" id="A6NGS2"/>
<dbReference type="BioGRID-ORCS" id="100170765">
    <property type="hits" value="5 hits in 246 CRISPR screens"/>
</dbReference>
<dbReference type="GenomeRNAi" id="100170765"/>
<dbReference type="Pharos" id="A6NGS2">
    <property type="development level" value="Tdark"/>
</dbReference>
<dbReference type="PRO" id="PR:A6NGS2"/>
<dbReference type="Proteomes" id="UP000005640">
    <property type="component" value="Chromosome 19"/>
</dbReference>
<dbReference type="RNAct" id="A6NGS2">
    <property type="molecule type" value="protein"/>
</dbReference>
<dbReference type="Bgee" id="ENSG00000204978">
    <property type="expression patterns" value="Expressed in jejunal mucosa and 94 other cell types or tissues"/>
</dbReference>
<dbReference type="InterPro" id="IPR029202">
    <property type="entry name" value="DUF4530"/>
</dbReference>
<dbReference type="PANTHER" id="PTHR36879">
    <property type="entry name" value="GLUTAMATE-RICH PROTEIN 4"/>
    <property type="match status" value="1"/>
</dbReference>
<dbReference type="PANTHER" id="PTHR36879:SF1">
    <property type="entry name" value="GLUTAMATE-RICH PROTEIN 4"/>
    <property type="match status" value="1"/>
</dbReference>
<dbReference type="Pfam" id="PF15039">
    <property type="entry name" value="DUF4530"/>
    <property type="match status" value="1"/>
</dbReference>
<proteinExistence type="evidence at protein level"/>
<reference key="1">
    <citation type="journal article" date="2004" name="Nature">
        <title>The DNA sequence and biology of human chromosome 19.</title>
        <authorList>
            <person name="Grimwood J."/>
            <person name="Gordon L.A."/>
            <person name="Olsen A.S."/>
            <person name="Terry A."/>
            <person name="Schmutz J."/>
            <person name="Lamerdin J.E."/>
            <person name="Hellsten U."/>
            <person name="Goodstein D."/>
            <person name="Couronne O."/>
            <person name="Tran-Gyamfi M."/>
            <person name="Aerts A."/>
            <person name="Altherr M."/>
            <person name="Ashworth L."/>
            <person name="Bajorek E."/>
            <person name="Black S."/>
            <person name="Branscomb E."/>
            <person name="Caenepeel S."/>
            <person name="Carrano A.V."/>
            <person name="Caoile C."/>
            <person name="Chan Y.M."/>
            <person name="Christensen M."/>
            <person name="Cleland C.A."/>
            <person name="Copeland A."/>
            <person name="Dalin E."/>
            <person name="Dehal P."/>
            <person name="Denys M."/>
            <person name="Detter J.C."/>
            <person name="Escobar J."/>
            <person name="Flowers D."/>
            <person name="Fotopulos D."/>
            <person name="Garcia C."/>
            <person name="Georgescu A.M."/>
            <person name="Glavina T."/>
            <person name="Gomez M."/>
            <person name="Gonzales E."/>
            <person name="Groza M."/>
            <person name="Hammon N."/>
            <person name="Hawkins T."/>
            <person name="Haydu L."/>
            <person name="Ho I."/>
            <person name="Huang W."/>
            <person name="Israni S."/>
            <person name="Jett J."/>
            <person name="Kadner K."/>
            <person name="Kimball H."/>
            <person name="Kobayashi A."/>
            <person name="Larionov V."/>
            <person name="Leem S.-H."/>
            <person name="Lopez F."/>
            <person name="Lou Y."/>
            <person name="Lowry S."/>
            <person name="Malfatti S."/>
            <person name="Martinez D."/>
            <person name="McCready P.M."/>
            <person name="Medina C."/>
            <person name="Morgan J."/>
            <person name="Nelson K."/>
            <person name="Nolan M."/>
            <person name="Ovcharenko I."/>
            <person name="Pitluck S."/>
            <person name="Pollard M."/>
            <person name="Popkie A.P."/>
            <person name="Predki P."/>
            <person name="Quan G."/>
            <person name="Ramirez L."/>
            <person name="Rash S."/>
            <person name="Retterer J."/>
            <person name="Rodriguez A."/>
            <person name="Rogers S."/>
            <person name="Salamov A."/>
            <person name="Salazar A."/>
            <person name="She X."/>
            <person name="Smith D."/>
            <person name="Slezak T."/>
            <person name="Solovyev V."/>
            <person name="Thayer N."/>
            <person name="Tice H."/>
            <person name="Tsai M."/>
            <person name="Ustaszewska A."/>
            <person name="Vo N."/>
            <person name="Wagner M."/>
            <person name="Wheeler J."/>
            <person name="Wu K."/>
            <person name="Xie G."/>
            <person name="Yang J."/>
            <person name="Dubchak I."/>
            <person name="Furey T.S."/>
            <person name="DeJong P."/>
            <person name="Dickson M."/>
            <person name="Gordon D."/>
            <person name="Eichler E.E."/>
            <person name="Pennacchio L.A."/>
            <person name="Richardson P."/>
            <person name="Stubbs L."/>
            <person name="Rokhsar D.S."/>
            <person name="Myers R.M."/>
            <person name="Rubin E.M."/>
            <person name="Lucas S.M."/>
        </authorList>
    </citation>
    <scope>NUCLEOTIDE SEQUENCE [LARGE SCALE GENOMIC DNA]</scope>
</reference>
<feature type="chain" id="PRO_0000340277" description="Glutamate-rich protein 4">
    <location>
        <begin position="1"/>
        <end position="130"/>
    </location>
</feature>
<feature type="region of interest" description="Disordered" evidence="1">
    <location>
        <begin position="91"/>
        <end position="130"/>
    </location>
</feature>
<feature type="compositionally biased region" description="Acidic residues" evidence="1">
    <location>
        <begin position="91"/>
        <end position="104"/>
    </location>
</feature>
<feature type="compositionally biased region" description="Basic and acidic residues" evidence="1">
    <location>
        <begin position="105"/>
        <end position="116"/>
    </location>
</feature>
<sequence>MELWRQLNQAGLVPPGLGPPPQALREVSPVEIPGQTLRTAGADTGGACDSLLWIREELGNLRRVDVQLLGQLCSLGLEMGALREELVTILEEEEESSKEEEEDQEPQRKQEEEHLEACPAPHPPDFEMMI</sequence>
<accession>A6NGS2</accession>
<keyword id="KW-1267">Proteomics identification</keyword>
<keyword id="KW-1185">Reference proteome</keyword>
<gene>
    <name type="primary">ERICH4</name>
    <name type="synonym">C19orf69</name>
</gene>